<sequence length="700" mass="77111">MGSLSPLSLLWGLLLLQGVLRPLRGDPVFIPPFIRMSSPEVRATLVGGSEDVAVSLSLLQVEEGVLPVPTCGGRRNETVDWNVTVSPRESTLEVTIRWKRGLDWCSADETASFSEPPCVLQMLLVSASHNASCLAHLLIQVEIYPNTSVTHNASENMTVIPNQVYQPLGPCPCDLTAKACDIQCCCDQDCQPEVRELFAQSCFSGVFGGHVSPPSHHHCAVSTTHQTPDWFPLLCVQSPPSTSPFLGHFYHGATSPRHSPGFEAHLHFDLRDFADASYKQGDPIMTTEGYFTIPQVSLAGQCLQDAPVAFLRNFDSVCTMDLEVHQGRDEIVLENMKIRTTGGPVTPTVTYEEAIDLDKFITSPDTVLSVGSAPRNVNVEEHYVFRWQNNSISGLDITVIRAEISAQQRGMMTQRFTVKFLSHHSGGEKEFSGNPGYQLGKPVRALHTAGMNVSTLHLWQPAGRGLCTAAALRPILFGENAFSGCLLEVGIKENCTQLRENVLQRLDLLTQATHVARRGNSDYSDLSDGWLEIIRAEAPDTGADLPLSSVNGVCPEVPARLSIRILTAEAGSVEGVAQREILAVETRFSTVTWQYQCGLTCEDKADLLPLSASVEFINVPAQMPHPPTRFQINFTEYDCTRNELCWPQLLYPLTQYYQGEPQSQCVAKGLMLLSLLMLAILLRHPWVRMCKARDSAAIYH</sequence>
<proteinExistence type="evidence at protein level"/>
<dbReference type="EMBL" id="DQ278869">
    <property type="protein sequence ID" value="ABB90561.1"/>
    <property type="molecule type" value="mRNA"/>
</dbReference>
<dbReference type="EMBL" id="AK014476">
    <property type="protein sequence ID" value="BAB29379.1"/>
    <property type="molecule type" value="mRNA"/>
</dbReference>
<dbReference type="EMBL" id="AK031829">
    <property type="protein sequence ID" value="BAC27569.1"/>
    <property type="molecule type" value="mRNA"/>
</dbReference>
<dbReference type="EMBL" id="BC058375">
    <property type="protein sequence ID" value="AAH58375.1"/>
    <property type="molecule type" value="mRNA"/>
</dbReference>
<dbReference type="RefSeq" id="NP_080762.1">
    <molecule id="Q2MV57-1"/>
    <property type="nucleotide sequence ID" value="NM_026486.3"/>
</dbReference>
<dbReference type="BioGRID" id="212577">
    <property type="interactions" value="1"/>
</dbReference>
<dbReference type="CORUM" id="Q2MV57"/>
<dbReference type="FunCoup" id="Q2MV57">
    <property type="interactions" value="311"/>
</dbReference>
<dbReference type="IntAct" id="Q2MV57">
    <property type="interactions" value="3"/>
</dbReference>
<dbReference type="STRING" id="10090.ENSMUSP00000158959"/>
<dbReference type="GlyCosmos" id="Q2MV57">
    <property type="glycosylation" value="5 sites, No reported glycans"/>
</dbReference>
<dbReference type="GlyGen" id="Q2MV57">
    <property type="glycosylation" value="9 sites, 3 N-linked glycans (5 sites)"/>
</dbReference>
<dbReference type="iPTMnet" id="Q2MV57"/>
<dbReference type="PhosphoSitePlus" id="Q2MV57"/>
<dbReference type="SwissPalm" id="Q2MV57"/>
<dbReference type="ProteomicsDB" id="263154">
    <molecule id="Q2MV57-1"/>
</dbReference>
<dbReference type="ProteomicsDB" id="263155">
    <molecule id="Q2MV57-2"/>
</dbReference>
<dbReference type="Antibodypedia" id="45731">
    <property type="antibodies" value="164 antibodies from 30 providers"/>
</dbReference>
<dbReference type="DNASU" id="67978"/>
<dbReference type="Ensembl" id="ENSMUST00000239501.2">
    <molecule id="Q2MV57-1"/>
    <property type="protein sequence ID" value="ENSMUSP00000159383.2"/>
    <property type="gene ID" value="ENSMUSG00000118662.2"/>
</dbReference>
<dbReference type="GeneID" id="67978"/>
<dbReference type="KEGG" id="mmu:67978"/>
<dbReference type="UCSC" id="uc008zqg.2">
    <molecule id="Q2MV57-1"/>
    <property type="organism name" value="mouse"/>
</dbReference>
<dbReference type="AGR" id="MGI:1915228"/>
<dbReference type="CTD" id="79867"/>
<dbReference type="MGI" id="MGI:1915228">
    <property type="gene designation" value="Tctn2"/>
</dbReference>
<dbReference type="GeneTree" id="ENSGT00570000079101"/>
<dbReference type="InParanoid" id="Q2MV57"/>
<dbReference type="OMA" id="GWFPFLC"/>
<dbReference type="OrthoDB" id="9282501at2759"/>
<dbReference type="PhylomeDB" id="Q2MV57"/>
<dbReference type="Reactome" id="R-MMU-5620912">
    <property type="pathway name" value="Anchoring of the basal body to the plasma membrane"/>
</dbReference>
<dbReference type="BioGRID-ORCS" id="67978">
    <property type="hits" value="2 hits in 22 CRISPR screens"/>
</dbReference>
<dbReference type="ChiTaRS" id="Tctn2">
    <property type="organism name" value="mouse"/>
</dbReference>
<dbReference type="PRO" id="PR:Q2MV57"/>
<dbReference type="Proteomes" id="UP000000589">
    <property type="component" value="Chromosome 5"/>
</dbReference>
<dbReference type="RNAct" id="Q2MV57">
    <property type="molecule type" value="protein"/>
</dbReference>
<dbReference type="GO" id="GO:0035869">
    <property type="term" value="C:ciliary transition zone"/>
    <property type="evidence" value="ECO:0000314"/>
    <property type="project" value="MGI"/>
</dbReference>
<dbReference type="GO" id="GO:0005737">
    <property type="term" value="C:cytoplasm"/>
    <property type="evidence" value="ECO:0007669"/>
    <property type="project" value="UniProtKB-KW"/>
</dbReference>
<dbReference type="GO" id="GO:0005856">
    <property type="term" value="C:cytoskeleton"/>
    <property type="evidence" value="ECO:0007669"/>
    <property type="project" value="UniProtKB-KW"/>
</dbReference>
<dbReference type="GO" id="GO:0016020">
    <property type="term" value="C:membrane"/>
    <property type="evidence" value="ECO:0007669"/>
    <property type="project" value="UniProtKB-SubCell"/>
</dbReference>
<dbReference type="GO" id="GO:0036038">
    <property type="term" value="C:MKS complex"/>
    <property type="evidence" value="ECO:0000314"/>
    <property type="project" value="UniProtKB"/>
</dbReference>
<dbReference type="GO" id="GO:0060271">
    <property type="term" value="P:cilium assembly"/>
    <property type="evidence" value="ECO:0000315"/>
    <property type="project" value="UniProtKB"/>
</dbReference>
<dbReference type="GO" id="GO:1904491">
    <property type="term" value="P:protein localization to ciliary transition zone"/>
    <property type="evidence" value="ECO:0000315"/>
    <property type="project" value="WormBase"/>
</dbReference>
<dbReference type="GO" id="GO:0007224">
    <property type="term" value="P:smoothened signaling pathway"/>
    <property type="evidence" value="ECO:0000315"/>
    <property type="project" value="UniProtKB"/>
</dbReference>
<dbReference type="InterPro" id="IPR040354">
    <property type="entry name" value="Tectonic"/>
</dbReference>
<dbReference type="InterPro" id="IPR011677">
    <property type="entry name" value="Tectonic_dom"/>
</dbReference>
<dbReference type="PANTHER" id="PTHR14611">
    <property type="entry name" value="TECTONIC FAMILY MEMBER"/>
    <property type="match status" value="1"/>
</dbReference>
<dbReference type="PANTHER" id="PTHR14611:SF6">
    <property type="entry name" value="TECTONIC-2"/>
    <property type="match status" value="1"/>
</dbReference>
<dbReference type="Pfam" id="PF07773">
    <property type="entry name" value="TCTN_DUF1619"/>
    <property type="match status" value="1"/>
</dbReference>
<accession>Q2MV57</accession>
<accession>Q6PDZ5</accession>
<accession>Q8C0B3</accession>
<accession>Q9CXF5</accession>
<name>TECT2_MOUSE</name>
<protein>
    <recommendedName>
        <fullName>Tectonic-2</fullName>
    </recommendedName>
</protein>
<comment type="function">
    <text evidence="4 5 6">Component of the tectonic-like complex, a complex localized at the transition zone of primary cilia and acting as a barrier that prevents diffusion of transmembrane proteins between the cilia and plasma membranes. Required for hedgehog signaling transduction.</text>
</comment>
<comment type="subunit">
    <text evidence="5 6">Part of the tectonic-like complex (also named B9 complex).</text>
</comment>
<comment type="subcellular location">
    <subcellularLocation>
        <location evidence="8">Membrane</location>
        <topology evidence="8">Single-pass type I membrane protein</topology>
    </subcellularLocation>
    <subcellularLocation>
        <location evidence="5">Cytoplasm</location>
        <location evidence="5">Cytoskeleton</location>
        <location evidence="5">Cilium basal body</location>
    </subcellularLocation>
    <text>Localizes at the transition zone, a region between the basal body and the ciliary axoneme.</text>
</comment>
<comment type="alternative products">
    <event type="alternative splicing"/>
    <isoform>
        <id>Q2MV57-1</id>
        <name>1</name>
        <sequence type="displayed"/>
    </isoform>
    <isoform>
        <id>Q2MV57-2</id>
        <name>2</name>
        <sequence type="described" ref="VSP_017766"/>
    </isoform>
</comment>
<comment type="tissue specificity">
    <text evidence="3">Significant expression is observed in brain, kidney and eye.</text>
</comment>
<comment type="developmental stage">
    <text evidence="3">At 8.5 dpc, expressed in the neural tube, most notably in the rhombomere of the future hindbrain. By 10.5 dpc, expressed throughout the brain, the length of the neural tube, the growing edge of the limb buds, heart, and eyes. Strong expression is observed in the kidney at 14.5 dpc.</text>
</comment>
<comment type="disruption phenotype">
    <text evidence="4 5">Mice have ventricular septal defects and can display right-sided stomach. The embryos exhibit microphthalmia, cleft palate and polydactyly. Embryos lack also nodal cilia. Cilia in neural tubes are scarce and morphologically defective, and failed to elongate axonemes. Basal bodies dock to the plasma membrane in Tctn2 null neural epithelium. No Arl13b ciliary staining in defective Tctn2 embryos perineural mesenchyme suggesting that, as in Tctn1 null mutants, defective Tctn2 cilia lack Arl13b. Tctn1 and Tctn2 share a common function, with both affecting ciliogenesis in a tissue-specific manner.</text>
</comment>
<comment type="similarity">
    <text evidence="8">Belongs to the tectonic family.</text>
</comment>
<keyword id="KW-0025">Alternative splicing</keyword>
<keyword id="KW-0966">Cell projection</keyword>
<keyword id="KW-0970">Cilium biogenesis/degradation</keyword>
<keyword id="KW-0963">Cytoplasm</keyword>
<keyword id="KW-0206">Cytoskeleton</keyword>
<keyword id="KW-0325">Glycoprotein</keyword>
<keyword id="KW-0472">Membrane</keyword>
<keyword id="KW-1185">Reference proteome</keyword>
<keyword id="KW-0732">Signal</keyword>
<keyword id="KW-0812">Transmembrane</keyword>
<keyword id="KW-1133">Transmembrane helix</keyword>
<gene>
    <name type="primary">Tctn2</name>
    <name type="synonym">Tect2</name>
</gene>
<evidence type="ECO:0000255" key="1"/>
<evidence type="ECO:0000269" key="2">
    <source>
    </source>
</evidence>
<evidence type="ECO:0000269" key="3">
    <source>
    </source>
</evidence>
<evidence type="ECO:0000269" key="4">
    <source>
    </source>
</evidence>
<evidence type="ECO:0000269" key="5">
    <source>
    </source>
</evidence>
<evidence type="ECO:0000269" key="6">
    <source>
    </source>
</evidence>
<evidence type="ECO:0000303" key="7">
    <source>
    </source>
</evidence>
<evidence type="ECO:0000305" key="8"/>
<reference key="1">
    <citation type="journal article" date="2006" name="Genes Dev.">
        <title>Tectonic, a novel regulator of the Hedgehog pathway required for both activation and inhibition.</title>
        <authorList>
            <person name="Reiter J.F."/>
            <person name="Skarnes W.C."/>
        </authorList>
    </citation>
    <scope>NUCLEOTIDE SEQUENCE [MRNA] (ISOFORM 1)</scope>
    <source>
        <strain>C57BL/6J</strain>
    </source>
</reference>
<reference key="2">
    <citation type="journal article" date="2005" name="Science">
        <title>The transcriptional landscape of the mammalian genome.</title>
        <authorList>
            <person name="Carninci P."/>
            <person name="Kasukawa T."/>
            <person name="Katayama S."/>
            <person name="Gough J."/>
            <person name="Frith M.C."/>
            <person name="Maeda N."/>
            <person name="Oyama R."/>
            <person name="Ravasi T."/>
            <person name="Lenhard B."/>
            <person name="Wells C."/>
            <person name="Kodzius R."/>
            <person name="Shimokawa K."/>
            <person name="Bajic V.B."/>
            <person name="Brenner S.E."/>
            <person name="Batalov S."/>
            <person name="Forrest A.R."/>
            <person name="Zavolan M."/>
            <person name="Davis M.J."/>
            <person name="Wilming L.G."/>
            <person name="Aidinis V."/>
            <person name="Allen J.E."/>
            <person name="Ambesi-Impiombato A."/>
            <person name="Apweiler R."/>
            <person name="Aturaliya R.N."/>
            <person name="Bailey T.L."/>
            <person name="Bansal M."/>
            <person name="Baxter L."/>
            <person name="Beisel K.W."/>
            <person name="Bersano T."/>
            <person name="Bono H."/>
            <person name="Chalk A.M."/>
            <person name="Chiu K.P."/>
            <person name="Choudhary V."/>
            <person name="Christoffels A."/>
            <person name="Clutterbuck D.R."/>
            <person name="Crowe M.L."/>
            <person name="Dalla E."/>
            <person name="Dalrymple B.P."/>
            <person name="de Bono B."/>
            <person name="Della Gatta G."/>
            <person name="di Bernardo D."/>
            <person name="Down T."/>
            <person name="Engstrom P."/>
            <person name="Fagiolini M."/>
            <person name="Faulkner G."/>
            <person name="Fletcher C.F."/>
            <person name="Fukushima T."/>
            <person name="Furuno M."/>
            <person name="Futaki S."/>
            <person name="Gariboldi M."/>
            <person name="Georgii-Hemming P."/>
            <person name="Gingeras T.R."/>
            <person name="Gojobori T."/>
            <person name="Green R.E."/>
            <person name="Gustincich S."/>
            <person name="Harbers M."/>
            <person name="Hayashi Y."/>
            <person name="Hensch T.K."/>
            <person name="Hirokawa N."/>
            <person name="Hill D."/>
            <person name="Huminiecki L."/>
            <person name="Iacono M."/>
            <person name="Ikeo K."/>
            <person name="Iwama A."/>
            <person name="Ishikawa T."/>
            <person name="Jakt M."/>
            <person name="Kanapin A."/>
            <person name="Katoh M."/>
            <person name="Kawasawa Y."/>
            <person name="Kelso J."/>
            <person name="Kitamura H."/>
            <person name="Kitano H."/>
            <person name="Kollias G."/>
            <person name="Krishnan S.P."/>
            <person name="Kruger A."/>
            <person name="Kummerfeld S.K."/>
            <person name="Kurochkin I.V."/>
            <person name="Lareau L.F."/>
            <person name="Lazarevic D."/>
            <person name="Lipovich L."/>
            <person name="Liu J."/>
            <person name="Liuni S."/>
            <person name="McWilliam S."/>
            <person name="Madan Babu M."/>
            <person name="Madera M."/>
            <person name="Marchionni L."/>
            <person name="Matsuda H."/>
            <person name="Matsuzawa S."/>
            <person name="Miki H."/>
            <person name="Mignone F."/>
            <person name="Miyake S."/>
            <person name="Morris K."/>
            <person name="Mottagui-Tabar S."/>
            <person name="Mulder N."/>
            <person name="Nakano N."/>
            <person name="Nakauchi H."/>
            <person name="Ng P."/>
            <person name="Nilsson R."/>
            <person name="Nishiguchi S."/>
            <person name="Nishikawa S."/>
            <person name="Nori F."/>
            <person name="Ohara O."/>
            <person name="Okazaki Y."/>
            <person name="Orlando V."/>
            <person name="Pang K.C."/>
            <person name="Pavan W.J."/>
            <person name="Pavesi G."/>
            <person name="Pesole G."/>
            <person name="Petrovsky N."/>
            <person name="Piazza S."/>
            <person name="Reed J."/>
            <person name="Reid J.F."/>
            <person name="Ring B.Z."/>
            <person name="Ringwald M."/>
            <person name="Rost B."/>
            <person name="Ruan Y."/>
            <person name="Salzberg S.L."/>
            <person name="Sandelin A."/>
            <person name="Schneider C."/>
            <person name="Schoenbach C."/>
            <person name="Sekiguchi K."/>
            <person name="Semple C.A."/>
            <person name="Seno S."/>
            <person name="Sessa L."/>
            <person name="Sheng Y."/>
            <person name="Shibata Y."/>
            <person name="Shimada H."/>
            <person name="Shimada K."/>
            <person name="Silva D."/>
            <person name="Sinclair B."/>
            <person name="Sperling S."/>
            <person name="Stupka E."/>
            <person name="Sugiura K."/>
            <person name="Sultana R."/>
            <person name="Takenaka Y."/>
            <person name="Taki K."/>
            <person name="Tammoja K."/>
            <person name="Tan S.L."/>
            <person name="Tang S."/>
            <person name="Taylor M.S."/>
            <person name="Tegner J."/>
            <person name="Teichmann S.A."/>
            <person name="Ueda H.R."/>
            <person name="van Nimwegen E."/>
            <person name="Verardo R."/>
            <person name="Wei C.L."/>
            <person name="Yagi K."/>
            <person name="Yamanishi H."/>
            <person name="Zabarovsky E."/>
            <person name="Zhu S."/>
            <person name="Zimmer A."/>
            <person name="Hide W."/>
            <person name="Bult C."/>
            <person name="Grimmond S.M."/>
            <person name="Teasdale R.D."/>
            <person name="Liu E.T."/>
            <person name="Brusic V."/>
            <person name="Quackenbush J."/>
            <person name="Wahlestedt C."/>
            <person name="Mattick J.S."/>
            <person name="Hume D.A."/>
            <person name="Kai C."/>
            <person name="Sasaki D."/>
            <person name="Tomaru Y."/>
            <person name="Fukuda S."/>
            <person name="Kanamori-Katayama M."/>
            <person name="Suzuki M."/>
            <person name="Aoki J."/>
            <person name="Arakawa T."/>
            <person name="Iida J."/>
            <person name="Imamura K."/>
            <person name="Itoh M."/>
            <person name="Kato T."/>
            <person name="Kawaji H."/>
            <person name="Kawagashira N."/>
            <person name="Kawashima T."/>
            <person name="Kojima M."/>
            <person name="Kondo S."/>
            <person name="Konno H."/>
            <person name="Nakano K."/>
            <person name="Ninomiya N."/>
            <person name="Nishio T."/>
            <person name="Okada M."/>
            <person name="Plessy C."/>
            <person name="Shibata K."/>
            <person name="Shiraki T."/>
            <person name="Suzuki S."/>
            <person name="Tagami M."/>
            <person name="Waki K."/>
            <person name="Watahiki A."/>
            <person name="Okamura-Oho Y."/>
            <person name="Suzuki H."/>
            <person name="Kawai J."/>
            <person name="Hayashizaki Y."/>
        </authorList>
    </citation>
    <scope>NUCLEOTIDE SEQUENCE [LARGE SCALE MRNA] (ISOFORM 1)</scope>
    <source>
        <strain>C57BL/6J</strain>
        <tissue>Liver</tissue>
        <tissue>Medulla oblongata</tissue>
    </source>
</reference>
<reference key="3">
    <citation type="journal article" date="2004" name="Genome Res.">
        <title>The status, quality, and expansion of the NIH full-length cDNA project: the Mammalian Gene Collection (MGC).</title>
        <authorList>
            <consortium name="The MGC Project Team"/>
        </authorList>
    </citation>
    <scope>NUCLEOTIDE SEQUENCE [LARGE SCALE MRNA] (ISOFORM 2)</scope>
    <source>
        <strain>C57BL/6J</strain>
        <tissue>Brain</tissue>
    </source>
</reference>
<reference key="4">
    <citation type="journal article" date="2009" name="Nat. Biotechnol.">
        <title>Mass-spectrometric identification and relative quantification of N-linked cell surface glycoproteins.</title>
        <authorList>
            <person name="Wollscheid B."/>
            <person name="Bausch-Fluck D."/>
            <person name="Henderson C."/>
            <person name="O'Brien R."/>
            <person name="Bibel M."/>
            <person name="Schiess R."/>
            <person name="Aebersold R."/>
            <person name="Watts J.D."/>
        </authorList>
    </citation>
    <scope>GLYCOSYLATION [LARGE SCALE ANALYSIS] AT ASN-389</scope>
</reference>
<reference key="5">
    <citation type="journal article" date="2011" name="Cell">
        <title>Mapping the NPHP-JBTS-MKS protein network reveals ciliopathy disease genes and pathways.</title>
        <authorList>
            <person name="Sang L."/>
            <person name="Miller J.J."/>
            <person name="Corbit K.C."/>
            <person name="Giles R.H."/>
            <person name="Brauer M.J."/>
            <person name="Otto E.A."/>
            <person name="Baye L.M."/>
            <person name="Wen X."/>
            <person name="Scales S.J."/>
            <person name="Kwong M."/>
            <person name="Huntzicker E.G."/>
            <person name="Sfakianos M.K."/>
            <person name="Sandoval W."/>
            <person name="Bazan J.F."/>
            <person name="Kulkarni P."/>
            <person name="Garcia-Gonzalo F.R."/>
            <person name="Seol A.D."/>
            <person name="O'Toole J.F."/>
            <person name="Held S."/>
            <person name="Reutter H.M."/>
            <person name="Lane W.S."/>
            <person name="Rafiq M.A."/>
            <person name="Noor A."/>
            <person name="Ansar M."/>
            <person name="Devi A.R."/>
            <person name="Sheffield V.C."/>
            <person name="Slusarski D.C."/>
            <person name="Vincent J.B."/>
            <person name="Doherty D.A."/>
            <person name="Hildebrandt F."/>
            <person name="Reiter J.F."/>
            <person name="Jackson P.K."/>
        </authorList>
    </citation>
    <scope>FUNCTION</scope>
    <scope>DISRUPTION PHENOTYPE</scope>
    <scope>INTERACTION WITH MKS1</scope>
</reference>
<reference key="6">
    <citation type="journal article" date="2011" name="Hum. Mutat.">
        <title>A TCTN2 mutation defines a novel Meckel Gruber syndrome locus.</title>
        <authorList>
            <person name="Shaheen R."/>
            <person name="Faqeih E."/>
            <person name="Seidahmed M.Z."/>
            <person name="Sunker A."/>
            <person name="Alali F.E."/>
            <person name="Alkuraya F.S."/>
        </authorList>
    </citation>
    <scope>TISSUE SPECIFICITY</scope>
    <scope>DEVELOPMENTAL STAGE</scope>
</reference>
<reference key="7">
    <citation type="journal article" date="2012" name="Nat. Cell Biol.">
        <title>A ciliopathy complex at the transition zone protects the cilia as a privileged membrane domain.</title>
        <authorList>
            <person name="Chih B."/>
            <person name="Liu P."/>
            <person name="Chinn Y."/>
            <person name="Chalouni C."/>
            <person name="Komuves L.G."/>
            <person name="Hass P.E."/>
            <person name="Sandoval W."/>
            <person name="Peterson A.S."/>
        </authorList>
    </citation>
    <scope>IDENTIFICATION IN THE TECTONIC-LIKE COMPLEX</scope>
    <scope>FUNCTION</scope>
</reference>
<reference key="8">
    <citation type="journal article" date="2011" name="Nat. Genet.">
        <title>A transition zone complex regulates mammalian ciliogenesis and ciliary membrane composition.</title>
        <authorList>
            <person name="Garcia-Gonzalo F.R."/>
            <person name="Corbit K.C."/>
            <person name="Sirerol-Piquer M.S."/>
            <person name="Ramaswami G."/>
            <person name="Otto E.A."/>
            <person name="Noriega T.R."/>
            <person name="Seol A.D."/>
            <person name="Robinson J.F."/>
            <person name="Bennett C.L."/>
            <person name="Josifova D.J."/>
            <person name="Garcia-Verdugo J.M."/>
            <person name="Katsanis N."/>
            <person name="Hildebrandt F."/>
            <person name="Reiter J.F."/>
        </authorList>
    </citation>
    <scope>FUNCTION</scope>
    <scope>DISRUPTION PHENOTYPE</scope>
    <scope>SUBCELLULAR LOCATION</scope>
    <scope>IDENTIFICATION IN THE TECTONIC-LIKE COMPLEX</scope>
</reference>
<feature type="signal peptide" evidence="1">
    <location>
        <begin position="1"/>
        <end position="25"/>
    </location>
</feature>
<feature type="chain" id="PRO_0000229799" description="Tectonic-2">
    <location>
        <begin position="26"/>
        <end position="700"/>
    </location>
</feature>
<feature type="topological domain" description="Extracellular" evidence="1">
    <location>
        <begin position="26"/>
        <end position="665"/>
    </location>
</feature>
<feature type="transmembrane region" description="Helical" evidence="1">
    <location>
        <begin position="666"/>
        <end position="682"/>
    </location>
</feature>
<feature type="topological domain" description="Cytoplasmic" evidence="1">
    <location>
        <begin position="683"/>
        <end position="700"/>
    </location>
</feature>
<feature type="glycosylation site" description="N-linked (GlcNAc...) asparagine" evidence="1">
    <location>
        <position position="76"/>
    </location>
</feature>
<feature type="glycosylation site" description="N-linked (GlcNAc...) asparagine" evidence="1">
    <location>
        <position position="82"/>
    </location>
</feature>
<feature type="glycosylation site" description="N-linked (GlcNAc...) asparagine" evidence="1">
    <location>
        <position position="146"/>
    </location>
</feature>
<feature type="glycosylation site" description="N-linked (GlcNAc...) asparagine" evidence="1">
    <location>
        <position position="156"/>
    </location>
</feature>
<feature type="glycosylation site" description="N-linked (GlcNAc...) asparagine" evidence="2">
    <location>
        <position position="389"/>
    </location>
</feature>
<feature type="splice variant" id="VSP_017766" description="In isoform 2." evidence="7">
    <location>
        <begin position="1"/>
        <end position="121"/>
    </location>
</feature>
<feature type="sequence conflict" description="In Ref. 1; ABB90561." evidence="8" ref="1">
    <original>R</original>
    <variation>Q</variation>
    <location>
        <position position="42"/>
    </location>
</feature>
<feature type="sequence conflict" description="In Ref. 1; ABB90561." evidence="8" ref="1">
    <original>S</original>
    <variation>T</variation>
    <location>
        <position position="57"/>
    </location>
</feature>
<feature type="sequence conflict" description="In Ref. 1; ABB90561." evidence="8" ref="1">
    <original>V</original>
    <variation>E</variation>
    <location>
        <position position="79"/>
    </location>
</feature>
<feature type="sequence conflict" description="In Ref. 2; BAC27569." evidence="8" ref="2">
    <original>D</original>
    <variation>E</variation>
    <location>
        <position position="272"/>
    </location>
</feature>
<organism>
    <name type="scientific">Mus musculus</name>
    <name type="common">Mouse</name>
    <dbReference type="NCBI Taxonomy" id="10090"/>
    <lineage>
        <taxon>Eukaryota</taxon>
        <taxon>Metazoa</taxon>
        <taxon>Chordata</taxon>
        <taxon>Craniata</taxon>
        <taxon>Vertebrata</taxon>
        <taxon>Euteleostomi</taxon>
        <taxon>Mammalia</taxon>
        <taxon>Eutheria</taxon>
        <taxon>Euarchontoglires</taxon>
        <taxon>Glires</taxon>
        <taxon>Rodentia</taxon>
        <taxon>Myomorpha</taxon>
        <taxon>Muroidea</taxon>
        <taxon>Muridae</taxon>
        <taxon>Murinae</taxon>
        <taxon>Mus</taxon>
        <taxon>Mus</taxon>
    </lineage>
</organism>